<sequence>MSKSKCSVGLMSSVVAPAKEPNAMGPKEVELILVKEQNGVQLTSSTLTNPRQSPVEAQDRETWGKKIDFLLSVIGFAVDLANVWRFPYLCYKNGGGAFLVPYLLFMVIAGMPLFYMELALGQFNREGAAGVWKICPVLKGVGFTVILISLYVGFFYNVIIAWALHYLFSSFTTELPWIHCNNSWNSPNCSDAHSGDSGGNGPGLNDTFGTTPAAEYFERGVLHLHQSHGIDDLGPPRWQLTACLVLVIVLLYFSLWKGVKTSGKVVWITATMPYVVLTALLLRGVTLPGAIDGIRAYLSVDFYRLCEASVWIDAATQVCFSLGVGFGVLIAFSSYNKFTNNCYRDAIVTTSINSLTSFSSGFVVFSFLGYMAQKHSVPIGDVAKDGPGLIFIIYPEAIATLPLSSAWAVVFFIMLLTLGIDSAMGGMESVITGLIDEFQLLHRHRELFTLFIVLATFLLSLFCVTNGGIYVFTLLDHFAAGTSILFGVLIEAIGVAWFYGVGQFSDDIQQMTGQRPSLYWRLCWKLVSPCFLLFVVVVSIVTFRPPHYGAYIFPDWANALGWVIATSSMAMVPIYAAYKFCSLPGSFREKLAYAIAPEKDRELVDRGEVRQFTLRHWLKV</sequence>
<keyword id="KW-1003">Cell membrane</keyword>
<keyword id="KW-0966">Cell projection</keyword>
<keyword id="KW-1015">Disulfide bond</keyword>
<keyword id="KW-0325">Glycoprotein</keyword>
<keyword id="KW-0472">Membrane</keyword>
<keyword id="KW-0479">Metal-binding</keyword>
<keyword id="KW-0532">Neurotransmitter transport</keyword>
<keyword id="KW-1185">Reference proteome</keyword>
<keyword id="KW-0915">Sodium</keyword>
<keyword id="KW-0769">Symport</keyword>
<keyword id="KW-0812">Transmembrane</keyword>
<keyword id="KW-1133">Transmembrane helix</keyword>
<keyword id="KW-0813">Transport</keyword>
<accession>Q9GJT6</accession>
<proteinExistence type="evidence at transcript level"/>
<gene>
    <name type="primary">SLC6A3</name>
    <name type="synonym">DAT1</name>
</gene>
<name>SC6A3_MACFA</name>
<comment type="function">
    <text evidence="2 4">Mediates sodium- and chloride-dependent transport of dopamine (By similarity). Also mediates sodium- and chloride-dependent transport of norepinephrine (also known as noradrenaline) (By similarity). Regulator of light-dependent retinal hyaloid vessel regression, downstream of OPN5 signaling (By similarity).</text>
</comment>
<comment type="catalytic activity">
    <reaction evidence="2">
        <text>dopamine(out) + chloride(out) + Na(+)(out) = dopamine(in) + chloride(in) + Na(+)(in)</text>
        <dbReference type="Rhea" id="RHEA:70919"/>
        <dbReference type="ChEBI" id="CHEBI:17996"/>
        <dbReference type="ChEBI" id="CHEBI:29101"/>
        <dbReference type="ChEBI" id="CHEBI:59905"/>
    </reaction>
</comment>
<comment type="catalytic activity">
    <reaction evidence="2">
        <text>(R)-noradrenaline(out) + chloride(out) + Na(+)(out) = (R)-noradrenaline(in) + chloride(in) + Na(+)(in)</text>
        <dbReference type="Rhea" id="RHEA:70923"/>
        <dbReference type="ChEBI" id="CHEBI:17996"/>
        <dbReference type="ChEBI" id="CHEBI:29101"/>
        <dbReference type="ChEBI" id="CHEBI:72587"/>
    </reaction>
</comment>
<comment type="catalytic activity">
    <reaction evidence="2">
        <text>dopamine(out) + chloride(out) + 2 Na(+)(out) = dopamine(in) + chloride(in) + 2 Na(+)(in)</text>
        <dbReference type="Rhea" id="RHEA:70931"/>
        <dbReference type="ChEBI" id="CHEBI:17996"/>
        <dbReference type="ChEBI" id="CHEBI:29101"/>
        <dbReference type="ChEBI" id="CHEBI:59905"/>
    </reaction>
</comment>
<comment type="activity regulation">
    <text evidence="3">Inhibited by zinc ions.</text>
</comment>
<comment type="subunit">
    <text evidence="3 4">Monomer (By similarity). Homooligomer; disulfide-linked (By similarity). Interacts with PRKCABP and TGFB1I1 (By similarity). Interacts (via N-terminus) with SYNGR3 (via N-terminus) (By similarity). Interacts with SLC18A2 (By similarity). Interacts with TOR1A (ATP-bound); TOR1A regulates SLC6A3 subcellular location (By similarity). Interacts with alpha-synuclein/SNCA (By similarity). Interacts with SEPTIN4 (By similarity).</text>
</comment>
<comment type="subcellular location">
    <subcellularLocation>
        <location evidence="3">Cell membrane</location>
        <topology evidence="3">Multi-pass membrane protein</topology>
    </subcellularLocation>
    <subcellularLocation>
        <location evidence="2">Cell projection</location>
        <location evidence="2">Neuron projection</location>
    </subcellularLocation>
    <subcellularLocation>
        <location evidence="3">Cell projection</location>
        <location evidence="3">Axon</location>
    </subcellularLocation>
    <text evidence="2 4">Localizes to neurite tips in neuronal cells (By similarity). Colocalizes with SEPTIN4 at axon terminals, especially at the varicosities (By similarity).</text>
</comment>
<comment type="miscellaneous">
    <text>This protein is the target of psychomotor stimulants such as amphetamines or cocaine.</text>
</comment>
<comment type="similarity">
    <text evidence="6">Belongs to the sodium:neurotransmitter symporter (SNF) (TC 2.A.22) family. SLC6A3 subfamily.</text>
</comment>
<feature type="chain" id="PRO_0000214752" description="Sodium-dependent dopamine transporter">
    <location>
        <begin position="1"/>
        <end position="620"/>
    </location>
</feature>
<feature type="topological domain" description="Cytoplasmic" evidence="3">
    <location>
        <begin position="1"/>
        <end position="56"/>
    </location>
</feature>
<feature type="transmembrane region" description="Discontinuously helical; Name=1" evidence="3">
    <location>
        <begin position="57"/>
        <end position="95"/>
    </location>
</feature>
<feature type="transmembrane region" description="Helical; Name=2" evidence="3">
    <location>
        <begin position="96"/>
        <end position="127"/>
    </location>
</feature>
<feature type="transmembrane region" description="Helical; Name=3" evidence="3">
    <location>
        <begin position="128"/>
        <end position="171"/>
    </location>
</feature>
<feature type="topological domain" description="Extracellular" evidence="3">
    <location>
        <begin position="172"/>
        <end position="236"/>
    </location>
</feature>
<feature type="transmembrane region" description="Helical; Name=4" evidence="3">
    <location>
        <begin position="237"/>
        <end position="256"/>
    </location>
</feature>
<feature type="transmembrane region" description="Helical; Name=5" evidence="3">
    <location>
        <begin position="257"/>
        <end position="287"/>
    </location>
</feature>
<feature type="topological domain" description="Extracellular" evidence="3">
    <location>
        <begin position="288"/>
        <end position="306"/>
    </location>
</feature>
<feature type="transmembrane region" description="Discontinuously helical; Name=6" evidence="3">
    <location>
        <begin position="307"/>
        <end position="335"/>
    </location>
</feature>
<feature type="transmembrane region" description="Helical; Name=7" evidence="3">
    <location>
        <begin position="336"/>
        <end position="376"/>
    </location>
</feature>
<feature type="topological domain" description="Extracellular" evidence="3">
    <location>
        <begin position="377"/>
        <end position="400"/>
    </location>
</feature>
<feature type="transmembrane region" description="Helical; Name=8" evidence="3">
    <location>
        <begin position="401"/>
        <end position="442"/>
    </location>
</feature>
<feature type="transmembrane region" description="Helical; Name=9" evidence="3">
    <location>
        <begin position="443"/>
        <end position="466"/>
    </location>
</feature>
<feature type="transmembrane region" description="Helical; Name=10" evidence="3">
    <location>
        <begin position="467"/>
        <end position="499"/>
    </location>
</feature>
<feature type="topological domain" description="Cytoplasmic" evidence="3">
    <location>
        <begin position="500"/>
        <end position="516"/>
    </location>
</feature>
<feature type="transmembrane region" description="Helical; Name=11" evidence="3">
    <location>
        <begin position="517"/>
        <end position="542"/>
    </location>
</feature>
<feature type="topological domain" description="Extracellular" evidence="3">
    <location>
        <begin position="543"/>
        <end position="553"/>
    </location>
</feature>
<feature type="transmembrane region" description="Helical; Name=12" evidence="3">
    <location>
        <begin position="554"/>
        <end position="583"/>
    </location>
</feature>
<feature type="topological domain" description="Cytoplasmic" evidence="3">
    <location>
        <begin position="584"/>
        <end position="620"/>
    </location>
</feature>
<feature type="region of interest" description="Interaction with TGFB1I1" evidence="1">
    <location>
        <begin position="561"/>
        <end position="590"/>
    </location>
</feature>
<feature type="binding site" evidence="3">
    <location>
        <position position="75"/>
    </location>
    <ligand>
        <name>Na(+)</name>
        <dbReference type="ChEBI" id="CHEBI:29101"/>
        <label>1</label>
    </ligand>
</feature>
<feature type="binding site" evidence="3">
    <location>
        <position position="77"/>
    </location>
    <ligand>
        <name>Na(+)</name>
        <dbReference type="ChEBI" id="CHEBI:29101"/>
        <label>2</label>
    </ligand>
</feature>
<feature type="binding site" evidence="3">
    <location>
        <position position="78"/>
    </location>
    <ligand>
        <name>Na(+)</name>
        <dbReference type="ChEBI" id="CHEBI:29101"/>
        <label>1</label>
    </ligand>
</feature>
<feature type="binding site" evidence="3">
    <location>
        <position position="79"/>
    </location>
    <ligand>
        <name>dopamine</name>
        <dbReference type="ChEBI" id="CHEBI:59905"/>
    </ligand>
</feature>
<feature type="binding site" evidence="3">
    <location>
        <position position="79"/>
    </location>
    <ligand>
        <name>Na(+)</name>
        <dbReference type="ChEBI" id="CHEBI:29101"/>
        <label>1</label>
    </ligand>
</feature>
<feature type="binding site" evidence="3">
    <location>
        <position position="79"/>
    </location>
    <ligand>
        <name>Na(+)</name>
        <dbReference type="ChEBI" id="CHEBI:29101"/>
        <label>2</label>
    </ligand>
</feature>
<feature type="binding site" evidence="3">
    <location>
        <position position="82"/>
    </location>
    <ligand>
        <name>Na(+)</name>
        <dbReference type="ChEBI" id="CHEBI:29101"/>
        <label>2</label>
    </ligand>
</feature>
<feature type="binding site" evidence="3">
    <location>
        <position position="149"/>
    </location>
    <ligand>
        <name>dopamine</name>
        <dbReference type="ChEBI" id="CHEBI:59905"/>
    </ligand>
</feature>
<feature type="binding site" evidence="3">
    <location>
        <position position="153"/>
    </location>
    <ligand>
        <name>dopamine</name>
        <dbReference type="ChEBI" id="CHEBI:59905"/>
    </ligand>
</feature>
<feature type="binding site" evidence="3">
    <location>
        <position position="317"/>
    </location>
    <ligand>
        <name>chloride</name>
        <dbReference type="ChEBI" id="CHEBI:17996"/>
    </ligand>
</feature>
<feature type="binding site" evidence="3">
    <location>
        <position position="320"/>
    </location>
    <ligand>
        <name>dopamine</name>
        <dbReference type="ChEBI" id="CHEBI:59905"/>
    </ligand>
</feature>
<feature type="binding site" evidence="3">
    <location>
        <position position="321"/>
    </location>
    <ligand>
        <name>chloride</name>
        <dbReference type="ChEBI" id="CHEBI:17996"/>
    </ligand>
</feature>
<feature type="binding site" evidence="3">
    <location>
        <position position="321"/>
    </location>
    <ligand>
        <name>Na(+)</name>
        <dbReference type="ChEBI" id="CHEBI:29101"/>
        <label>2</label>
    </ligand>
</feature>
<feature type="binding site" evidence="3">
    <location>
        <position position="353"/>
    </location>
    <ligand>
        <name>Na(+)</name>
        <dbReference type="ChEBI" id="CHEBI:29101"/>
        <label>2</label>
    </ligand>
</feature>
<feature type="binding site" evidence="3">
    <location>
        <position position="357"/>
    </location>
    <ligand>
        <name>chloride</name>
        <dbReference type="ChEBI" id="CHEBI:17996"/>
    </ligand>
</feature>
<feature type="binding site" evidence="3">
    <location>
        <position position="418"/>
    </location>
    <ligand>
        <name>Na(+)</name>
        <dbReference type="ChEBI" id="CHEBI:29101"/>
        <label>1</label>
    </ligand>
</feature>
<feature type="binding site" evidence="3">
    <location>
        <position position="421"/>
    </location>
    <ligand>
        <name>Na(+)</name>
        <dbReference type="ChEBI" id="CHEBI:29101"/>
        <label>1</label>
    </ligand>
</feature>
<feature type="binding site" evidence="3">
    <location>
        <position position="422"/>
    </location>
    <ligand>
        <name>dopamine</name>
        <dbReference type="ChEBI" id="CHEBI:59905"/>
    </ligand>
</feature>
<feature type="binding site" evidence="3">
    <location>
        <position position="422"/>
    </location>
    <ligand>
        <name>Na(+)</name>
        <dbReference type="ChEBI" id="CHEBI:29101"/>
        <label>1</label>
    </ligand>
</feature>
<feature type="binding site" evidence="3">
    <location>
        <position position="423"/>
    </location>
    <ligand>
        <name>dopamine</name>
        <dbReference type="ChEBI" id="CHEBI:59905"/>
    </ligand>
</feature>
<feature type="site" description="Contributes to high-affinity binding to cocaine" evidence="4">
    <location>
        <position position="105"/>
    </location>
</feature>
<feature type="glycosylation site" description="N-linked (GlcNAc...) asparagine" evidence="3">
    <location>
        <position position="181"/>
    </location>
</feature>
<feature type="glycosylation site" description="N-linked (GlcNAc...) asparagine" evidence="3">
    <location>
        <position position="188"/>
    </location>
</feature>
<feature type="glycosylation site" description="N-linked (GlcNAc...) asparagine" evidence="5">
    <location>
        <position position="205"/>
    </location>
</feature>
<feature type="disulfide bond" evidence="3">
    <location>
        <begin position="180"/>
        <end position="189"/>
    </location>
</feature>
<feature type="disulfide bond" description="Interchain" evidence="3">
    <location>
        <position position="306"/>
    </location>
</feature>
<organism>
    <name type="scientific">Macaca fascicularis</name>
    <name type="common">Crab-eating macaque</name>
    <name type="synonym">Cynomolgus monkey</name>
    <dbReference type="NCBI Taxonomy" id="9541"/>
    <lineage>
        <taxon>Eukaryota</taxon>
        <taxon>Metazoa</taxon>
        <taxon>Chordata</taxon>
        <taxon>Craniata</taxon>
        <taxon>Vertebrata</taxon>
        <taxon>Euteleostomi</taxon>
        <taxon>Mammalia</taxon>
        <taxon>Eutheria</taxon>
        <taxon>Euarchontoglires</taxon>
        <taxon>Primates</taxon>
        <taxon>Haplorrhini</taxon>
        <taxon>Catarrhini</taxon>
        <taxon>Cercopithecidae</taxon>
        <taxon>Cercopithecinae</taxon>
        <taxon>Macaca</taxon>
    </lineage>
</organism>
<reference key="1">
    <citation type="journal article" date="2001" name="Brain Res. Mol. Brain Res.">
        <title>Cloning of dopamine, norepinephrine and serotonin transporters from monkey brain: relevance to cocaine sensitivity.</title>
        <authorList>
            <person name="Miller G.M."/>
            <person name="Yatin S.M."/>
            <person name="De La Garza R. II"/>
            <person name="Goulet M."/>
            <person name="Madras B.K."/>
        </authorList>
    </citation>
    <scope>NUCLEOTIDE SEQUENCE [MRNA]</scope>
    <source>
        <tissue>Substantia nigra</tissue>
    </source>
</reference>
<protein>
    <recommendedName>
        <fullName>Sodium-dependent dopamine transporter</fullName>
        <shortName>DA transporter</shortName>
        <shortName evidence="3">DAT</shortName>
    </recommendedName>
    <alternativeName>
        <fullName>Solute carrier family 6 member 3</fullName>
    </alternativeName>
</protein>
<dbReference type="EMBL" id="AF286447">
    <property type="protein sequence ID" value="AAG00538.1"/>
    <property type="molecule type" value="mRNA"/>
</dbReference>
<dbReference type="RefSeq" id="NP_001270253.1">
    <property type="nucleotide sequence ID" value="NM_001283324.1"/>
</dbReference>
<dbReference type="RefSeq" id="XP_045249445.1">
    <property type="nucleotide sequence ID" value="XM_045393510.2"/>
</dbReference>
<dbReference type="SMR" id="Q9GJT6"/>
<dbReference type="STRING" id="9541.ENSMFAP00000035133"/>
<dbReference type="BindingDB" id="Q9GJT6"/>
<dbReference type="ChEMBL" id="CHEMBL5032"/>
<dbReference type="DrugCentral" id="Q9GJT6"/>
<dbReference type="GlyCosmos" id="Q9GJT6">
    <property type="glycosylation" value="3 sites, No reported glycans"/>
</dbReference>
<dbReference type="Ensembl" id="ENSMFAT00000009368.2">
    <property type="protein sequence ID" value="ENSMFAP00000035133.1"/>
    <property type="gene ID" value="ENSMFAG00000003977.2"/>
</dbReference>
<dbReference type="GeneID" id="102142756"/>
<dbReference type="VEuPathDB" id="HostDB:ENSMFAG00000003977"/>
<dbReference type="eggNOG" id="KOG3659">
    <property type="taxonomic scope" value="Eukaryota"/>
</dbReference>
<dbReference type="GeneTree" id="ENSGT00940000161224"/>
<dbReference type="OMA" id="LAWAMVY"/>
<dbReference type="PRO" id="PR:Q9GJT6"/>
<dbReference type="Proteomes" id="UP000233100">
    <property type="component" value="Chromosome 6"/>
</dbReference>
<dbReference type="GO" id="GO:0043679">
    <property type="term" value="C:axon terminus"/>
    <property type="evidence" value="ECO:0007669"/>
    <property type="project" value="Ensembl"/>
</dbReference>
<dbReference type="GO" id="GO:0009986">
    <property type="term" value="C:cell surface"/>
    <property type="evidence" value="ECO:0007669"/>
    <property type="project" value="Ensembl"/>
</dbReference>
<dbReference type="GO" id="GO:0016600">
    <property type="term" value="C:flotillin complex"/>
    <property type="evidence" value="ECO:0007669"/>
    <property type="project" value="Ensembl"/>
</dbReference>
<dbReference type="GO" id="GO:0043005">
    <property type="term" value="C:neuron projection"/>
    <property type="evidence" value="ECO:0000250"/>
    <property type="project" value="UniProtKB"/>
</dbReference>
<dbReference type="GO" id="GO:0043025">
    <property type="term" value="C:neuronal cell body"/>
    <property type="evidence" value="ECO:0007669"/>
    <property type="project" value="Ensembl"/>
</dbReference>
<dbReference type="GO" id="GO:0035240">
    <property type="term" value="F:dopamine binding"/>
    <property type="evidence" value="ECO:0007669"/>
    <property type="project" value="Ensembl"/>
</dbReference>
<dbReference type="GO" id="GO:0005330">
    <property type="term" value="F:dopamine:sodium symporter activity"/>
    <property type="evidence" value="ECO:0000250"/>
    <property type="project" value="UniProtKB"/>
</dbReference>
<dbReference type="GO" id="GO:0046872">
    <property type="term" value="F:metal ion binding"/>
    <property type="evidence" value="ECO:0007669"/>
    <property type="project" value="UniProtKB-KW"/>
</dbReference>
<dbReference type="GO" id="GO:0005326">
    <property type="term" value="F:neurotransmitter transmembrane transporter activity"/>
    <property type="evidence" value="ECO:0007669"/>
    <property type="project" value="Ensembl"/>
</dbReference>
<dbReference type="GO" id="GO:0021984">
    <property type="term" value="P:adenohypophysis development"/>
    <property type="evidence" value="ECO:0007669"/>
    <property type="project" value="Ensembl"/>
</dbReference>
<dbReference type="GO" id="GO:0006865">
    <property type="term" value="P:amino acid transport"/>
    <property type="evidence" value="ECO:0007669"/>
    <property type="project" value="TreeGrafter"/>
</dbReference>
<dbReference type="GO" id="GO:0050890">
    <property type="term" value="P:cognition"/>
    <property type="evidence" value="ECO:0007669"/>
    <property type="project" value="Ensembl"/>
</dbReference>
<dbReference type="GO" id="GO:0042416">
    <property type="term" value="P:dopamine biosynthetic process"/>
    <property type="evidence" value="ECO:0007669"/>
    <property type="project" value="Ensembl"/>
</dbReference>
<dbReference type="GO" id="GO:0042420">
    <property type="term" value="P:dopamine catabolic process"/>
    <property type="evidence" value="ECO:0007669"/>
    <property type="project" value="Ensembl"/>
</dbReference>
<dbReference type="GO" id="GO:0015872">
    <property type="term" value="P:dopamine transport"/>
    <property type="evidence" value="ECO:0000250"/>
    <property type="project" value="UniProtKB"/>
</dbReference>
<dbReference type="GO" id="GO:1990384">
    <property type="term" value="P:hyaloid vascular plexus regression"/>
    <property type="evidence" value="ECO:0000250"/>
    <property type="project" value="UniProtKB"/>
</dbReference>
<dbReference type="GO" id="GO:0007595">
    <property type="term" value="P:lactation"/>
    <property type="evidence" value="ECO:0007669"/>
    <property type="project" value="Ensembl"/>
</dbReference>
<dbReference type="GO" id="GO:0007626">
    <property type="term" value="P:locomotory behavior"/>
    <property type="evidence" value="ECO:0007669"/>
    <property type="project" value="Ensembl"/>
</dbReference>
<dbReference type="GO" id="GO:0001504">
    <property type="term" value="P:neurotransmitter uptake"/>
    <property type="evidence" value="ECO:0007669"/>
    <property type="project" value="Ensembl"/>
</dbReference>
<dbReference type="GO" id="GO:0040018">
    <property type="term" value="P:positive regulation of multicellular organism growth"/>
    <property type="evidence" value="ECO:0007669"/>
    <property type="project" value="Ensembl"/>
</dbReference>
<dbReference type="GO" id="GO:0060134">
    <property type="term" value="P:prepulse inhibition"/>
    <property type="evidence" value="ECO:0007669"/>
    <property type="project" value="Ensembl"/>
</dbReference>
<dbReference type="GO" id="GO:0042053">
    <property type="term" value="P:regulation of dopamine metabolic process"/>
    <property type="evidence" value="ECO:0007669"/>
    <property type="project" value="Ensembl"/>
</dbReference>
<dbReference type="GO" id="GO:0042220">
    <property type="term" value="P:response to cocaine"/>
    <property type="evidence" value="ECO:0007669"/>
    <property type="project" value="Ensembl"/>
</dbReference>
<dbReference type="GO" id="GO:0007608">
    <property type="term" value="P:sensory perception of smell"/>
    <property type="evidence" value="ECO:0007669"/>
    <property type="project" value="Ensembl"/>
</dbReference>
<dbReference type="CDD" id="cd11514">
    <property type="entry name" value="SLC6sbd_DAT1"/>
    <property type="match status" value="1"/>
</dbReference>
<dbReference type="InterPro" id="IPR000175">
    <property type="entry name" value="Na/ntran_symport"/>
</dbReference>
<dbReference type="InterPro" id="IPR002436">
    <property type="entry name" value="Na/ntran_symport_dopamine"/>
</dbReference>
<dbReference type="InterPro" id="IPR037272">
    <property type="entry name" value="SNS_sf"/>
</dbReference>
<dbReference type="NCBIfam" id="NF037979">
    <property type="entry name" value="Na_transp"/>
    <property type="match status" value="1"/>
</dbReference>
<dbReference type="PANTHER" id="PTHR11616:SF38">
    <property type="entry name" value="SODIUM-DEPENDENT DOPAMINE TRANSPORTER"/>
    <property type="match status" value="1"/>
</dbReference>
<dbReference type="PANTHER" id="PTHR11616">
    <property type="entry name" value="SODIUM/CHLORIDE DEPENDENT TRANSPORTER"/>
    <property type="match status" value="1"/>
</dbReference>
<dbReference type="Pfam" id="PF00209">
    <property type="entry name" value="SNF"/>
    <property type="match status" value="1"/>
</dbReference>
<dbReference type="PRINTS" id="PR01202">
    <property type="entry name" value="DOPTRANSPORT"/>
</dbReference>
<dbReference type="PRINTS" id="PR00176">
    <property type="entry name" value="NANEUSMPORT"/>
</dbReference>
<dbReference type="SUPFAM" id="SSF161070">
    <property type="entry name" value="SNF-like"/>
    <property type="match status" value="1"/>
</dbReference>
<dbReference type="PROSITE" id="PS00610">
    <property type="entry name" value="NA_NEUROTRAN_SYMP_1"/>
    <property type="match status" value="1"/>
</dbReference>
<dbReference type="PROSITE" id="PS00754">
    <property type="entry name" value="NA_NEUROTRAN_SYMP_2"/>
    <property type="match status" value="1"/>
</dbReference>
<dbReference type="PROSITE" id="PS50267">
    <property type="entry name" value="NA_NEUROTRAN_SYMP_3"/>
    <property type="match status" value="1"/>
</dbReference>
<evidence type="ECO:0000250" key="1"/>
<evidence type="ECO:0000250" key="2">
    <source>
        <dbReference type="UniProtKB" id="P23977"/>
    </source>
</evidence>
<evidence type="ECO:0000250" key="3">
    <source>
        <dbReference type="UniProtKB" id="Q01959"/>
    </source>
</evidence>
<evidence type="ECO:0000250" key="4">
    <source>
        <dbReference type="UniProtKB" id="Q61327"/>
    </source>
</evidence>
<evidence type="ECO:0000255" key="5"/>
<evidence type="ECO:0000305" key="6"/>